<keyword id="KW-0028">Amino-acid biosynthesis</keyword>
<keyword id="KW-0055">Arginine biosynthesis</keyword>
<keyword id="KW-0963">Cytoplasm</keyword>
<keyword id="KW-1185">Reference proteome</keyword>
<keyword id="KW-0808">Transferase</keyword>
<accession>B7LCW4</accession>
<gene>
    <name evidence="2" type="primary">argI</name>
    <name type="ordered locus">EC55989_4812</name>
</gene>
<sequence>MSGFYHKHFLKLLDFTPAELNSLLQLAAKLKADKKSGKEEAKLTGKNIALIFEKDSTRTRCSFEVAAYDQGARVTYLGPSGSQIGHKESIKDTARVLGRMYDGIQYRGYGQEIVETLAEYAGVPVWNGLTNEFHPTQLLADLLTMQEHLPGKAFNEMTLVYAGDARNNMGNSMLEAAALTGLDLRLVAPQACWPEAALVTECRALAQQNGGNITLTEDVAKGVEGADFIYTDVWVSMGEAKEKWAERIALLRDYQVNSKMMQLTGNPEVKFLHCLPAFHDDQTTLGKKMAEEFGLHGGMEVTDEVFESAASIVFDQAENRMHTIKAVMVATLSK</sequence>
<dbReference type="EC" id="2.1.3.3" evidence="2"/>
<dbReference type="EMBL" id="CU928145">
    <property type="protein sequence ID" value="CAV01791.1"/>
    <property type="molecule type" value="Genomic_DNA"/>
</dbReference>
<dbReference type="SMR" id="B7LCW4"/>
<dbReference type="KEGG" id="eck:EC55989_4812"/>
<dbReference type="HOGENOM" id="CLU_043846_3_1_6"/>
<dbReference type="UniPathway" id="UPA00068">
    <property type="reaction ID" value="UER00112"/>
</dbReference>
<dbReference type="Proteomes" id="UP000000746">
    <property type="component" value="Chromosome"/>
</dbReference>
<dbReference type="GO" id="GO:0005737">
    <property type="term" value="C:cytoplasm"/>
    <property type="evidence" value="ECO:0007669"/>
    <property type="project" value="UniProtKB-SubCell"/>
</dbReference>
<dbReference type="GO" id="GO:0016597">
    <property type="term" value="F:amino acid binding"/>
    <property type="evidence" value="ECO:0007669"/>
    <property type="project" value="InterPro"/>
</dbReference>
<dbReference type="GO" id="GO:0004585">
    <property type="term" value="F:ornithine carbamoyltransferase activity"/>
    <property type="evidence" value="ECO:0007669"/>
    <property type="project" value="UniProtKB-UniRule"/>
</dbReference>
<dbReference type="GO" id="GO:0042450">
    <property type="term" value="P:arginine biosynthetic process via ornithine"/>
    <property type="evidence" value="ECO:0007669"/>
    <property type="project" value="TreeGrafter"/>
</dbReference>
<dbReference type="GO" id="GO:0019240">
    <property type="term" value="P:citrulline biosynthetic process"/>
    <property type="evidence" value="ECO:0007669"/>
    <property type="project" value="TreeGrafter"/>
</dbReference>
<dbReference type="GO" id="GO:0006526">
    <property type="term" value="P:L-arginine biosynthetic process"/>
    <property type="evidence" value="ECO:0007669"/>
    <property type="project" value="UniProtKB-UniRule"/>
</dbReference>
<dbReference type="FunFam" id="3.40.50.1370:FF:000003">
    <property type="entry name" value="Ornithine carbamoyltransferase"/>
    <property type="match status" value="1"/>
</dbReference>
<dbReference type="FunFam" id="3.40.50.1370:FF:000004">
    <property type="entry name" value="Ornithine carbamoyltransferase"/>
    <property type="match status" value="1"/>
</dbReference>
<dbReference type="Gene3D" id="3.40.50.1370">
    <property type="entry name" value="Aspartate/ornithine carbamoyltransferase"/>
    <property type="match status" value="2"/>
</dbReference>
<dbReference type="HAMAP" id="MF_01109">
    <property type="entry name" value="OTCase"/>
    <property type="match status" value="1"/>
</dbReference>
<dbReference type="InterPro" id="IPR006132">
    <property type="entry name" value="Asp/Orn_carbamoyltranf_P-bd"/>
</dbReference>
<dbReference type="InterPro" id="IPR006130">
    <property type="entry name" value="Asp/Orn_carbamoylTrfase"/>
</dbReference>
<dbReference type="InterPro" id="IPR036901">
    <property type="entry name" value="Asp/Orn_carbamoylTrfase_sf"/>
</dbReference>
<dbReference type="InterPro" id="IPR006131">
    <property type="entry name" value="Asp_carbamoyltransf_Asp/Orn-bd"/>
</dbReference>
<dbReference type="InterPro" id="IPR002292">
    <property type="entry name" value="Orn/put_carbamltrans"/>
</dbReference>
<dbReference type="InterPro" id="IPR024904">
    <property type="entry name" value="OTCase_ArgI"/>
</dbReference>
<dbReference type="NCBIfam" id="TIGR00658">
    <property type="entry name" value="orni_carb_tr"/>
    <property type="match status" value="1"/>
</dbReference>
<dbReference type="NCBIfam" id="NF003286">
    <property type="entry name" value="PRK04284.1"/>
    <property type="match status" value="1"/>
</dbReference>
<dbReference type="NCBIfam" id="NF009213">
    <property type="entry name" value="PRK12562.1"/>
    <property type="match status" value="1"/>
</dbReference>
<dbReference type="PANTHER" id="PTHR45753:SF4">
    <property type="entry name" value="ORNITHINE CARBAMOYLTRANSFERASE SUBUNIT F-RELATED"/>
    <property type="match status" value="1"/>
</dbReference>
<dbReference type="PANTHER" id="PTHR45753">
    <property type="entry name" value="ORNITHINE CARBAMOYLTRANSFERASE, MITOCHONDRIAL"/>
    <property type="match status" value="1"/>
</dbReference>
<dbReference type="Pfam" id="PF00185">
    <property type="entry name" value="OTCace"/>
    <property type="match status" value="1"/>
</dbReference>
<dbReference type="Pfam" id="PF02729">
    <property type="entry name" value="OTCace_N"/>
    <property type="match status" value="1"/>
</dbReference>
<dbReference type="PRINTS" id="PR00100">
    <property type="entry name" value="AOTCASE"/>
</dbReference>
<dbReference type="PRINTS" id="PR00102">
    <property type="entry name" value="OTCASE"/>
</dbReference>
<dbReference type="SUPFAM" id="SSF53671">
    <property type="entry name" value="Aspartate/ornithine carbamoyltransferase"/>
    <property type="match status" value="1"/>
</dbReference>
<dbReference type="PROSITE" id="PS00097">
    <property type="entry name" value="CARBAMOYLTRANSFERASE"/>
    <property type="match status" value="1"/>
</dbReference>
<name>OTC_ECO55</name>
<feature type="chain" id="PRO_1000163968" description="Ornithine carbamoyltransferase">
    <location>
        <begin position="1"/>
        <end position="334"/>
    </location>
</feature>
<feature type="binding site" evidence="2">
    <location>
        <begin position="56"/>
        <end position="59"/>
    </location>
    <ligand>
        <name>carbamoyl phosphate</name>
        <dbReference type="ChEBI" id="CHEBI:58228"/>
    </ligand>
</feature>
<feature type="binding site" evidence="2">
    <location>
        <position position="83"/>
    </location>
    <ligand>
        <name>carbamoyl phosphate</name>
        <dbReference type="ChEBI" id="CHEBI:58228"/>
    </ligand>
</feature>
<feature type="binding site" evidence="2">
    <location>
        <position position="107"/>
    </location>
    <ligand>
        <name>carbamoyl phosphate</name>
        <dbReference type="ChEBI" id="CHEBI:58228"/>
    </ligand>
</feature>
<feature type="binding site" evidence="2">
    <location>
        <begin position="134"/>
        <end position="137"/>
    </location>
    <ligand>
        <name>carbamoyl phosphate</name>
        <dbReference type="ChEBI" id="CHEBI:58228"/>
    </ligand>
</feature>
<feature type="binding site" evidence="2">
    <location>
        <position position="168"/>
    </location>
    <ligand>
        <name>L-ornithine</name>
        <dbReference type="ChEBI" id="CHEBI:46911"/>
    </ligand>
</feature>
<feature type="binding site" evidence="2">
    <location>
        <position position="232"/>
    </location>
    <ligand>
        <name>L-ornithine</name>
        <dbReference type="ChEBI" id="CHEBI:46911"/>
    </ligand>
</feature>
<feature type="binding site" evidence="2">
    <location>
        <begin position="236"/>
        <end position="237"/>
    </location>
    <ligand>
        <name>L-ornithine</name>
        <dbReference type="ChEBI" id="CHEBI:46911"/>
    </ligand>
</feature>
<feature type="binding site" evidence="2">
    <location>
        <begin position="274"/>
        <end position="275"/>
    </location>
    <ligand>
        <name>carbamoyl phosphate</name>
        <dbReference type="ChEBI" id="CHEBI:58228"/>
    </ligand>
</feature>
<feature type="binding site" evidence="2">
    <location>
        <position position="320"/>
    </location>
    <ligand>
        <name>carbamoyl phosphate</name>
        <dbReference type="ChEBI" id="CHEBI:58228"/>
    </ligand>
</feature>
<evidence type="ECO:0000250" key="1"/>
<evidence type="ECO:0000255" key="2">
    <source>
        <dbReference type="HAMAP-Rule" id="MF_01109"/>
    </source>
</evidence>
<reference key="1">
    <citation type="journal article" date="2009" name="PLoS Genet.">
        <title>Organised genome dynamics in the Escherichia coli species results in highly diverse adaptive paths.</title>
        <authorList>
            <person name="Touchon M."/>
            <person name="Hoede C."/>
            <person name="Tenaillon O."/>
            <person name="Barbe V."/>
            <person name="Baeriswyl S."/>
            <person name="Bidet P."/>
            <person name="Bingen E."/>
            <person name="Bonacorsi S."/>
            <person name="Bouchier C."/>
            <person name="Bouvet O."/>
            <person name="Calteau A."/>
            <person name="Chiapello H."/>
            <person name="Clermont O."/>
            <person name="Cruveiller S."/>
            <person name="Danchin A."/>
            <person name="Diard M."/>
            <person name="Dossat C."/>
            <person name="Karoui M.E."/>
            <person name="Frapy E."/>
            <person name="Garry L."/>
            <person name="Ghigo J.M."/>
            <person name="Gilles A.M."/>
            <person name="Johnson J."/>
            <person name="Le Bouguenec C."/>
            <person name="Lescat M."/>
            <person name="Mangenot S."/>
            <person name="Martinez-Jehanne V."/>
            <person name="Matic I."/>
            <person name="Nassif X."/>
            <person name="Oztas S."/>
            <person name="Petit M.A."/>
            <person name="Pichon C."/>
            <person name="Rouy Z."/>
            <person name="Ruf C.S."/>
            <person name="Schneider D."/>
            <person name="Tourret J."/>
            <person name="Vacherie B."/>
            <person name="Vallenet D."/>
            <person name="Medigue C."/>
            <person name="Rocha E.P.C."/>
            <person name="Denamur E."/>
        </authorList>
    </citation>
    <scope>NUCLEOTIDE SEQUENCE [LARGE SCALE GENOMIC DNA]</scope>
    <source>
        <strain>55989 / EAEC</strain>
    </source>
</reference>
<protein>
    <recommendedName>
        <fullName evidence="2">Ornithine carbamoyltransferase</fullName>
        <shortName evidence="2">OTCase</shortName>
        <ecNumber evidence="2">2.1.3.3</ecNumber>
    </recommendedName>
</protein>
<organism>
    <name type="scientific">Escherichia coli (strain 55989 / EAEC)</name>
    <dbReference type="NCBI Taxonomy" id="585055"/>
    <lineage>
        <taxon>Bacteria</taxon>
        <taxon>Pseudomonadati</taxon>
        <taxon>Pseudomonadota</taxon>
        <taxon>Gammaproteobacteria</taxon>
        <taxon>Enterobacterales</taxon>
        <taxon>Enterobacteriaceae</taxon>
        <taxon>Escherichia</taxon>
    </lineage>
</organism>
<comment type="function">
    <text evidence="1">Reversibly catalyzes the transfer of the carbamoyl group from carbamoyl phosphate (CP) to the N(epsilon) atom of ornithine (ORN) to produce L-citrulline.</text>
</comment>
<comment type="catalytic activity">
    <reaction evidence="2">
        <text>carbamoyl phosphate + L-ornithine = L-citrulline + phosphate + H(+)</text>
        <dbReference type="Rhea" id="RHEA:19513"/>
        <dbReference type="ChEBI" id="CHEBI:15378"/>
        <dbReference type="ChEBI" id="CHEBI:43474"/>
        <dbReference type="ChEBI" id="CHEBI:46911"/>
        <dbReference type="ChEBI" id="CHEBI:57743"/>
        <dbReference type="ChEBI" id="CHEBI:58228"/>
        <dbReference type="EC" id="2.1.3.3"/>
    </reaction>
</comment>
<comment type="pathway">
    <text evidence="2">Amino-acid biosynthesis; L-arginine biosynthesis; L-arginine from L-ornithine and carbamoyl phosphate: step 1/3.</text>
</comment>
<comment type="subcellular location">
    <subcellularLocation>
        <location evidence="2">Cytoplasm</location>
    </subcellularLocation>
</comment>
<comment type="similarity">
    <text evidence="2">Belongs to the aspartate/ornithine carbamoyltransferase superfamily. OTCase family.</text>
</comment>
<proteinExistence type="inferred from homology"/>